<evidence type="ECO:0000255" key="1">
    <source>
        <dbReference type="HAMAP-Rule" id="MF_01367"/>
    </source>
</evidence>
<evidence type="ECO:0000305" key="2"/>
<sequence>MIQEQTMLNVADNSGARRVMCIKVLGGSHRRYAGVGDIIKITIKEAIPRGKVKKGDVLKAVVVRTKKGVRRPDGSVIRFDGNACVLLNNNSEQPIGTRIFGPVTRELRSEKFMKIISLAPEVL</sequence>
<protein>
    <recommendedName>
        <fullName evidence="1">Large ribosomal subunit protein uL14</fullName>
    </recommendedName>
    <alternativeName>
        <fullName evidence="2">50S ribosomal protein L14</fullName>
    </alternativeName>
</protein>
<accession>B7NLM9</accession>
<keyword id="KW-0687">Ribonucleoprotein</keyword>
<keyword id="KW-0689">Ribosomal protein</keyword>
<keyword id="KW-0694">RNA-binding</keyword>
<keyword id="KW-0699">rRNA-binding</keyword>
<feature type="chain" id="PRO_1000144264" description="Large ribosomal subunit protein uL14">
    <location>
        <begin position="1"/>
        <end position="123"/>
    </location>
</feature>
<reference key="1">
    <citation type="journal article" date="2009" name="PLoS Genet.">
        <title>Organised genome dynamics in the Escherichia coli species results in highly diverse adaptive paths.</title>
        <authorList>
            <person name="Touchon M."/>
            <person name="Hoede C."/>
            <person name="Tenaillon O."/>
            <person name="Barbe V."/>
            <person name="Baeriswyl S."/>
            <person name="Bidet P."/>
            <person name="Bingen E."/>
            <person name="Bonacorsi S."/>
            <person name="Bouchier C."/>
            <person name="Bouvet O."/>
            <person name="Calteau A."/>
            <person name="Chiapello H."/>
            <person name="Clermont O."/>
            <person name="Cruveiller S."/>
            <person name="Danchin A."/>
            <person name="Diard M."/>
            <person name="Dossat C."/>
            <person name="Karoui M.E."/>
            <person name="Frapy E."/>
            <person name="Garry L."/>
            <person name="Ghigo J.M."/>
            <person name="Gilles A.M."/>
            <person name="Johnson J."/>
            <person name="Le Bouguenec C."/>
            <person name="Lescat M."/>
            <person name="Mangenot S."/>
            <person name="Martinez-Jehanne V."/>
            <person name="Matic I."/>
            <person name="Nassif X."/>
            <person name="Oztas S."/>
            <person name="Petit M.A."/>
            <person name="Pichon C."/>
            <person name="Rouy Z."/>
            <person name="Ruf C.S."/>
            <person name="Schneider D."/>
            <person name="Tourret J."/>
            <person name="Vacherie B."/>
            <person name="Vallenet D."/>
            <person name="Medigue C."/>
            <person name="Rocha E.P.C."/>
            <person name="Denamur E."/>
        </authorList>
    </citation>
    <scope>NUCLEOTIDE SEQUENCE [LARGE SCALE GENOMIC DNA]</scope>
    <source>
        <strain>IAI39 / ExPEC</strain>
    </source>
</reference>
<proteinExistence type="inferred from homology"/>
<dbReference type="EMBL" id="CU928164">
    <property type="protein sequence ID" value="CAR19918.1"/>
    <property type="molecule type" value="Genomic_DNA"/>
</dbReference>
<dbReference type="RefSeq" id="WP_000613955.1">
    <property type="nucleotide sequence ID" value="NC_011750.1"/>
</dbReference>
<dbReference type="RefSeq" id="YP_002409701.1">
    <property type="nucleotide sequence ID" value="NC_011750.1"/>
</dbReference>
<dbReference type="SMR" id="B7NLM9"/>
<dbReference type="STRING" id="585057.ECIAI39_3804"/>
<dbReference type="GeneID" id="93778677"/>
<dbReference type="KEGG" id="ect:ECIAI39_3804"/>
<dbReference type="PATRIC" id="fig|585057.6.peg.3941"/>
<dbReference type="HOGENOM" id="CLU_095071_2_1_6"/>
<dbReference type="Proteomes" id="UP000000749">
    <property type="component" value="Chromosome"/>
</dbReference>
<dbReference type="GO" id="GO:0022625">
    <property type="term" value="C:cytosolic large ribosomal subunit"/>
    <property type="evidence" value="ECO:0007669"/>
    <property type="project" value="TreeGrafter"/>
</dbReference>
<dbReference type="GO" id="GO:0070180">
    <property type="term" value="F:large ribosomal subunit rRNA binding"/>
    <property type="evidence" value="ECO:0007669"/>
    <property type="project" value="TreeGrafter"/>
</dbReference>
<dbReference type="GO" id="GO:0003735">
    <property type="term" value="F:structural constituent of ribosome"/>
    <property type="evidence" value="ECO:0007669"/>
    <property type="project" value="InterPro"/>
</dbReference>
<dbReference type="GO" id="GO:0006412">
    <property type="term" value="P:translation"/>
    <property type="evidence" value="ECO:0007669"/>
    <property type="project" value="UniProtKB-UniRule"/>
</dbReference>
<dbReference type="CDD" id="cd00337">
    <property type="entry name" value="Ribosomal_uL14"/>
    <property type="match status" value="1"/>
</dbReference>
<dbReference type="FunFam" id="2.40.150.20:FF:000001">
    <property type="entry name" value="50S ribosomal protein L14"/>
    <property type="match status" value="1"/>
</dbReference>
<dbReference type="Gene3D" id="2.40.150.20">
    <property type="entry name" value="Ribosomal protein L14"/>
    <property type="match status" value="1"/>
</dbReference>
<dbReference type="HAMAP" id="MF_01367">
    <property type="entry name" value="Ribosomal_uL14"/>
    <property type="match status" value="1"/>
</dbReference>
<dbReference type="InterPro" id="IPR000218">
    <property type="entry name" value="Ribosomal_uL14"/>
</dbReference>
<dbReference type="InterPro" id="IPR005745">
    <property type="entry name" value="Ribosomal_uL14_bac-type"/>
</dbReference>
<dbReference type="InterPro" id="IPR019972">
    <property type="entry name" value="Ribosomal_uL14_CS"/>
</dbReference>
<dbReference type="InterPro" id="IPR036853">
    <property type="entry name" value="Ribosomal_uL14_sf"/>
</dbReference>
<dbReference type="NCBIfam" id="TIGR01067">
    <property type="entry name" value="rplN_bact"/>
    <property type="match status" value="1"/>
</dbReference>
<dbReference type="PANTHER" id="PTHR11761">
    <property type="entry name" value="50S/60S RIBOSOMAL PROTEIN L14/L23"/>
    <property type="match status" value="1"/>
</dbReference>
<dbReference type="PANTHER" id="PTHR11761:SF3">
    <property type="entry name" value="LARGE RIBOSOMAL SUBUNIT PROTEIN UL14M"/>
    <property type="match status" value="1"/>
</dbReference>
<dbReference type="Pfam" id="PF00238">
    <property type="entry name" value="Ribosomal_L14"/>
    <property type="match status" value="1"/>
</dbReference>
<dbReference type="SMART" id="SM01374">
    <property type="entry name" value="Ribosomal_L14"/>
    <property type="match status" value="1"/>
</dbReference>
<dbReference type="SUPFAM" id="SSF50193">
    <property type="entry name" value="Ribosomal protein L14"/>
    <property type="match status" value="1"/>
</dbReference>
<dbReference type="PROSITE" id="PS00049">
    <property type="entry name" value="RIBOSOMAL_L14"/>
    <property type="match status" value="1"/>
</dbReference>
<organism>
    <name type="scientific">Escherichia coli O7:K1 (strain IAI39 / ExPEC)</name>
    <dbReference type="NCBI Taxonomy" id="585057"/>
    <lineage>
        <taxon>Bacteria</taxon>
        <taxon>Pseudomonadati</taxon>
        <taxon>Pseudomonadota</taxon>
        <taxon>Gammaproteobacteria</taxon>
        <taxon>Enterobacterales</taxon>
        <taxon>Enterobacteriaceae</taxon>
        <taxon>Escherichia</taxon>
    </lineage>
</organism>
<comment type="function">
    <text evidence="1">Binds to 23S rRNA. Forms part of two intersubunit bridges in the 70S ribosome.</text>
</comment>
<comment type="subunit">
    <text evidence="1">Part of the 50S ribosomal subunit. Forms a cluster with proteins L3 and L19. In the 70S ribosome, L14 and L19 interact and together make contacts with the 16S rRNA in bridges B5 and B8.</text>
</comment>
<comment type="similarity">
    <text evidence="1">Belongs to the universal ribosomal protein uL14 family.</text>
</comment>
<name>RL14_ECO7I</name>
<gene>
    <name evidence="1" type="primary">rplN</name>
    <name type="ordered locus">ECIAI39_3804</name>
</gene>